<name>GPMI_STAAR</name>
<feature type="chain" id="PRO_0000212208" description="2,3-bisphosphoglycerate-independent phosphoglycerate mutase">
    <location>
        <begin position="1"/>
        <end position="505"/>
    </location>
</feature>
<feature type="active site" description="Phosphoserine intermediate" evidence="1">
    <location>
        <position position="62"/>
    </location>
</feature>
<feature type="binding site" evidence="1">
    <location>
        <position position="12"/>
    </location>
    <ligand>
        <name>Mn(2+)</name>
        <dbReference type="ChEBI" id="CHEBI:29035"/>
        <label>2</label>
    </ligand>
</feature>
<feature type="binding site" evidence="1">
    <location>
        <position position="62"/>
    </location>
    <ligand>
        <name>Mn(2+)</name>
        <dbReference type="ChEBI" id="CHEBI:29035"/>
        <label>2</label>
    </ligand>
</feature>
<feature type="binding site" evidence="1">
    <location>
        <position position="123"/>
    </location>
    <ligand>
        <name>substrate</name>
    </ligand>
</feature>
<feature type="binding site" evidence="1">
    <location>
        <begin position="153"/>
        <end position="154"/>
    </location>
    <ligand>
        <name>substrate</name>
    </ligand>
</feature>
<feature type="binding site" evidence="1">
    <location>
        <position position="185"/>
    </location>
    <ligand>
        <name>substrate</name>
    </ligand>
</feature>
<feature type="binding site" evidence="1">
    <location>
        <position position="191"/>
    </location>
    <ligand>
        <name>substrate</name>
    </ligand>
</feature>
<feature type="binding site" evidence="1">
    <location>
        <begin position="257"/>
        <end position="260"/>
    </location>
    <ligand>
        <name>substrate</name>
    </ligand>
</feature>
<feature type="binding site" evidence="1">
    <location>
        <position position="330"/>
    </location>
    <ligand>
        <name>substrate</name>
    </ligand>
</feature>
<feature type="binding site" evidence="1">
    <location>
        <position position="397"/>
    </location>
    <ligand>
        <name>Mn(2+)</name>
        <dbReference type="ChEBI" id="CHEBI:29035"/>
        <label>1</label>
    </ligand>
</feature>
<feature type="binding site" evidence="1">
    <location>
        <position position="401"/>
    </location>
    <ligand>
        <name>Mn(2+)</name>
        <dbReference type="ChEBI" id="CHEBI:29035"/>
        <label>1</label>
    </ligand>
</feature>
<feature type="binding site" evidence="1">
    <location>
        <position position="438"/>
    </location>
    <ligand>
        <name>Mn(2+)</name>
        <dbReference type="ChEBI" id="CHEBI:29035"/>
        <label>2</label>
    </ligand>
</feature>
<feature type="binding site" evidence="1">
    <location>
        <position position="439"/>
    </location>
    <ligand>
        <name>Mn(2+)</name>
        <dbReference type="ChEBI" id="CHEBI:29035"/>
        <label>2</label>
    </ligand>
</feature>
<feature type="binding site" evidence="1">
    <location>
        <position position="456"/>
    </location>
    <ligand>
        <name>Mn(2+)</name>
        <dbReference type="ChEBI" id="CHEBI:29035"/>
        <label>1</label>
    </ligand>
</feature>
<protein>
    <recommendedName>
        <fullName evidence="1">2,3-bisphosphoglycerate-independent phosphoglycerate mutase</fullName>
        <shortName evidence="1">BPG-independent PGAM</shortName>
        <shortName evidence="1">Phosphoglyceromutase</shortName>
        <shortName evidence="1">iPGM</shortName>
        <ecNumber evidence="1">5.4.2.12</ecNumber>
    </recommendedName>
</protein>
<gene>
    <name evidence="1" type="primary">gpmI</name>
    <name type="ordered locus">SAR0831</name>
</gene>
<proteinExistence type="inferred from homology"/>
<sequence>MAKKPTALIILDGFANRESEHGNAVKLANKPNFDRYYNKYPTTQIEASGLDVGLPEGQMGNSEVGHMNIGAGRIVYQSLTRINKSIEDGDFFENDVLNNAIAHVNSHDSALHIFGLLSDGGVHSHYKHLFALLELAKKQGVEKVYVHAFLDGRDVDQKSALKYIEETEAKFNELGIGQFASVSGRYYAMDRDKRWEREEKAYNAIRNFDAPTYATAKEGVEASYNEGLTDEFVVPFIVEDQNDGVNDGDAVIFYNFRPDRAAQLSEIFANRAFEGFKVEQVKDLFYATFTKYNDNIDAAIVFEKVDLNNTIGEIAQNNNLTQLRIAETEKYPHVTYFMSGGRNEEFKGERRRLIDSPKVATYDLKPEMSAYEVKDALLEELNKGDLDLIILNFANPDMVGHSGMLEPTIKAIEAVDECLGEVVDKILDMDGYAIITADHGNSDQVLTDDDQPMTTHTTNPVPVIVTKEGVTLRETGRLGDLAPTLLDLLNVEQPEDMTGESLIKH</sequence>
<comment type="function">
    <text evidence="1">Catalyzes the interconversion of 2-phosphoglycerate and 3-phosphoglycerate.</text>
</comment>
<comment type="catalytic activity">
    <reaction evidence="1">
        <text>(2R)-2-phosphoglycerate = (2R)-3-phosphoglycerate</text>
        <dbReference type="Rhea" id="RHEA:15901"/>
        <dbReference type="ChEBI" id="CHEBI:58272"/>
        <dbReference type="ChEBI" id="CHEBI:58289"/>
        <dbReference type="EC" id="5.4.2.12"/>
    </reaction>
</comment>
<comment type="cofactor">
    <cofactor evidence="1">
        <name>Mn(2+)</name>
        <dbReference type="ChEBI" id="CHEBI:29035"/>
    </cofactor>
    <text evidence="1">Binds 2 manganese ions per subunit.</text>
</comment>
<comment type="pathway">
    <text evidence="1">Carbohydrate degradation; glycolysis; pyruvate from D-glyceraldehyde 3-phosphate: step 3/5.</text>
</comment>
<comment type="subunit">
    <text evidence="1">Monomer.</text>
</comment>
<comment type="similarity">
    <text evidence="1">Belongs to the BPG-independent phosphoglycerate mutase family.</text>
</comment>
<accession>Q6GIL5</accession>
<dbReference type="EC" id="5.4.2.12" evidence="1"/>
<dbReference type="EMBL" id="BX571856">
    <property type="protein sequence ID" value="CAG39840.1"/>
    <property type="molecule type" value="Genomic_DNA"/>
</dbReference>
<dbReference type="RefSeq" id="WP_001085498.1">
    <property type="nucleotide sequence ID" value="NC_002952.2"/>
</dbReference>
<dbReference type="SMR" id="Q6GIL5"/>
<dbReference type="KEGG" id="sar:SAR0831"/>
<dbReference type="HOGENOM" id="CLU_026099_2_0_9"/>
<dbReference type="UniPathway" id="UPA00109">
    <property type="reaction ID" value="UER00186"/>
</dbReference>
<dbReference type="Proteomes" id="UP000000596">
    <property type="component" value="Chromosome"/>
</dbReference>
<dbReference type="GO" id="GO:0005829">
    <property type="term" value="C:cytosol"/>
    <property type="evidence" value="ECO:0007669"/>
    <property type="project" value="TreeGrafter"/>
</dbReference>
<dbReference type="GO" id="GO:0030145">
    <property type="term" value="F:manganese ion binding"/>
    <property type="evidence" value="ECO:0007669"/>
    <property type="project" value="UniProtKB-UniRule"/>
</dbReference>
<dbReference type="GO" id="GO:0004619">
    <property type="term" value="F:phosphoglycerate mutase activity"/>
    <property type="evidence" value="ECO:0007669"/>
    <property type="project" value="UniProtKB-EC"/>
</dbReference>
<dbReference type="GO" id="GO:0006007">
    <property type="term" value="P:glucose catabolic process"/>
    <property type="evidence" value="ECO:0007669"/>
    <property type="project" value="InterPro"/>
</dbReference>
<dbReference type="GO" id="GO:0006096">
    <property type="term" value="P:glycolytic process"/>
    <property type="evidence" value="ECO:0007669"/>
    <property type="project" value="UniProtKB-UniRule"/>
</dbReference>
<dbReference type="CDD" id="cd16010">
    <property type="entry name" value="iPGM"/>
    <property type="match status" value="1"/>
</dbReference>
<dbReference type="FunFam" id="3.40.1450.10:FF:000001">
    <property type="entry name" value="2,3-bisphosphoglycerate-independent phosphoglycerate mutase"/>
    <property type="match status" value="1"/>
</dbReference>
<dbReference type="FunFam" id="3.40.720.10:FF:000001">
    <property type="entry name" value="2,3-bisphosphoglycerate-independent phosphoglycerate mutase"/>
    <property type="match status" value="1"/>
</dbReference>
<dbReference type="Gene3D" id="3.40.720.10">
    <property type="entry name" value="Alkaline Phosphatase, subunit A"/>
    <property type="match status" value="1"/>
</dbReference>
<dbReference type="Gene3D" id="3.40.1450.10">
    <property type="entry name" value="BPG-independent phosphoglycerate mutase, domain B"/>
    <property type="match status" value="1"/>
</dbReference>
<dbReference type="HAMAP" id="MF_01038">
    <property type="entry name" value="GpmI"/>
    <property type="match status" value="1"/>
</dbReference>
<dbReference type="InterPro" id="IPR017850">
    <property type="entry name" value="Alkaline_phosphatase_core_sf"/>
</dbReference>
<dbReference type="InterPro" id="IPR011258">
    <property type="entry name" value="BPG-indep_PGM_N"/>
</dbReference>
<dbReference type="InterPro" id="IPR006124">
    <property type="entry name" value="Metalloenzyme"/>
</dbReference>
<dbReference type="InterPro" id="IPR036646">
    <property type="entry name" value="PGAM_B_sf"/>
</dbReference>
<dbReference type="InterPro" id="IPR005995">
    <property type="entry name" value="Pgm_bpd_ind"/>
</dbReference>
<dbReference type="NCBIfam" id="TIGR01307">
    <property type="entry name" value="pgm_bpd_ind"/>
    <property type="match status" value="1"/>
</dbReference>
<dbReference type="PANTHER" id="PTHR31637">
    <property type="entry name" value="2,3-BISPHOSPHOGLYCERATE-INDEPENDENT PHOSPHOGLYCERATE MUTASE"/>
    <property type="match status" value="1"/>
</dbReference>
<dbReference type="PANTHER" id="PTHR31637:SF0">
    <property type="entry name" value="2,3-BISPHOSPHOGLYCERATE-INDEPENDENT PHOSPHOGLYCERATE MUTASE"/>
    <property type="match status" value="1"/>
</dbReference>
<dbReference type="Pfam" id="PF06415">
    <property type="entry name" value="iPGM_N"/>
    <property type="match status" value="1"/>
</dbReference>
<dbReference type="Pfam" id="PF01676">
    <property type="entry name" value="Metalloenzyme"/>
    <property type="match status" value="1"/>
</dbReference>
<dbReference type="PIRSF" id="PIRSF001492">
    <property type="entry name" value="IPGAM"/>
    <property type="match status" value="1"/>
</dbReference>
<dbReference type="SUPFAM" id="SSF64158">
    <property type="entry name" value="2,3-Bisphosphoglycerate-independent phosphoglycerate mutase, substrate-binding domain"/>
    <property type="match status" value="1"/>
</dbReference>
<dbReference type="SUPFAM" id="SSF53649">
    <property type="entry name" value="Alkaline phosphatase-like"/>
    <property type="match status" value="1"/>
</dbReference>
<evidence type="ECO:0000255" key="1">
    <source>
        <dbReference type="HAMAP-Rule" id="MF_01038"/>
    </source>
</evidence>
<keyword id="KW-0324">Glycolysis</keyword>
<keyword id="KW-0413">Isomerase</keyword>
<keyword id="KW-0464">Manganese</keyword>
<keyword id="KW-0479">Metal-binding</keyword>
<reference key="1">
    <citation type="journal article" date="2004" name="Proc. Natl. Acad. Sci. U.S.A.">
        <title>Complete genomes of two clinical Staphylococcus aureus strains: evidence for the rapid evolution of virulence and drug resistance.</title>
        <authorList>
            <person name="Holden M.T.G."/>
            <person name="Feil E.J."/>
            <person name="Lindsay J.A."/>
            <person name="Peacock S.J."/>
            <person name="Day N.P.J."/>
            <person name="Enright M.C."/>
            <person name="Foster T.J."/>
            <person name="Moore C.E."/>
            <person name="Hurst L."/>
            <person name="Atkin R."/>
            <person name="Barron A."/>
            <person name="Bason N."/>
            <person name="Bentley S.D."/>
            <person name="Chillingworth C."/>
            <person name="Chillingworth T."/>
            <person name="Churcher C."/>
            <person name="Clark L."/>
            <person name="Corton C."/>
            <person name="Cronin A."/>
            <person name="Doggett J."/>
            <person name="Dowd L."/>
            <person name="Feltwell T."/>
            <person name="Hance Z."/>
            <person name="Harris B."/>
            <person name="Hauser H."/>
            <person name="Holroyd S."/>
            <person name="Jagels K."/>
            <person name="James K.D."/>
            <person name="Lennard N."/>
            <person name="Line A."/>
            <person name="Mayes R."/>
            <person name="Moule S."/>
            <person name="Mungall K."/>
            <person name="Ormond D."/>
            <person name="Quail M.A."/>
            <person name="Rabbinowitsch E."/>
            <person name="Rutherford K.M."/>
            <person name="Sanders M."/>
            <person name="Sharp S."/>
            <person name="Simmonds M."/>
            <person name="Stevens K."/>
            <person name="Whitehead S."/>
            <person name="Barrell B.G."/>
            <person name="Spratt B.G."/>
            <person name="Parkhill J."/>
        </authorList>
    </citation>
    <scope>NUCLEOTIDE SEQUENCE [LARGE SCALE GENOMIC DNA]</scope>
    <source>
        <strain>MRSA252</strain>
    </source>
</reference>
<organism>
    <name type="scientific">Staphylococcus aureus (strain MRSA252)</name>
    <dbReference type="NCBI Taxonomy" id="282458"/>
    <lineage>
        <taxon>Bacteria</taxon>
        <taxon>Bacillati</taxon>
        <taxon>Bacillota</taxon>
        <taxon>Bacilli</taxon>
        <taxon>Bacillales</taxon>
        <taxon>Staphylococcaceae</taxon>
        <taxon>Staphylococcus</taxon>
    </lineage>
</organism>